<gene>
    <name evidence="1" type="primary">yfeW</name>
    <name type="ordered locus">SCH_2474</name>
</gene>
<accession>Q57LN2</accession>
<protein>
    <recommendedName>
        <fullName evidence="1">Putative D-alanyl-D-alanine carboxypeptidase</fullName>
        <ecNumber evidence="1">3.4.16.4</ecNumber>
    </recommendedName>
    <alternativeName>
        <fullName evidence="1">DD-carboxypeptidase</fullName>
        <shortName evidence="1">DD-CPase</shortName>
    </alternativeName>
</protein>
<evidence type="ECO:0000255" key="1">
    <source>
        <dbReference type="HAMAP-Rule" id="MF_01034"/>
    </source>
</evidence>
<organism>
    <name type="scientific">Salmonella choleraesuis (strain SC-B67)</name>
    <dbReference type="NCBI Taxonomy" id="321314"/>
    <lineage>
        <taxon>Bacteria</taxon>
        <taxon>Pseudomonadati</taxon>
        <taxon>Pseudomonadota</taxon>
        <taxon>Gammaproteobacteria</taxon>
        <taxon>Enterobacterales</taxon>
        <taxon>Enterobacteriaceae</taxon>
        <taxon>Salmonella</taxon>
    </lineage>
</organism>
<comment type="catalytic activity">
    <reaction evidence="1">
        <text>Preferential cleavage: (Ac)2-L-Lys-D-Ala-|-D-Ala. Also transpeptidation of peptidyl-alanyl moieties that are N-acyl substituents of D-alanine.</text>
        <dbReference type="EC" id="3.4.16.4"/>
    </reaction>
</comment>
<comment type="subcellular location">
    <subcellularLocation>
        <location evidence="1">Cell inner membrane</location>
        <topology evidence="1">Single-pass membrane protein</topology>
    </subcellularLocation>
</comment>
<comment type="similarity">
    <text evidence="1">Belongs to the peptidase S12 family. YfeW subfamily.</text>
</comment>
<sequence>MKFTLVATVLLTFSLSAFAVEYPVLTTASPDQVGFDSQKLHRLDGWIQNQIDAGYPSINLLVIKDNHIVLQKAWGYAKKYDGSTLLAHPIRATTNTMYDLASNTKMYATNFALQKLVYEGKIDVNDLVSKYIPGFKDMPGDKIKGKDKLRIIDILHHVAGFPADPQYPNKNVAGKLFSQSKSTTLEMIKKTPLEYQPGSKHIYSDVDYMILGFIIESITAMPLDRYVETTIYKPLGLKHTVFNPLMKGFTPPQIAATELHGNTRDGVIHFPNIRTNTLWGQVHDEKAWYSMGGVSGHAGLFSDTHDMAVLMQVMLNGGGYGNVKLFDDKTVAQFTRRSPEDATFGLGWRVNGNASMTPTFGVLASPQTYGHTGWTGTLTSIDPVNHMAIVILGNRPHSPVANPKVNPNVFVSGLLPAATYGWIVDQIYGSLK</sequence>
<dbReference type="EC" id="3.4.16.4" evidence="1"/>
<dbReference type="EMBL" id="AE017220">
    <property type="protein sequence ID" value="AAX66380.1"/>
    <property type="molecule type" value="Genomic_DNA"/>
</dbReference>
<dbReference type="SMR" id="Q57LN2"/>
<dbReference type="MEROPS" id="S12.A03"/>
<dbReference type="KEGG" id="sec:SCH_2474"/>
<dbReference type="HOGENOM" id="CLU_020027_1_2_6"/>
<dbReference type="Proteomes" id="UP000000538">
    <property type="component" value="Chromosome"/>
</dbReference>
<dbReference type="GO" id="GO:0005886">
    <property type="term" value="C:plasma membrane"/>
    <property type="evidence" value="ECO:0007669"/>
    <property type="project" value="UniProtKB-SubCell"/>
</dbReference>
<dbReference type="GO" id="GO:0009002">
    <property type="term" value="F:serine-type D-Ala-D-Ala carboxypeptidase activity"/>
    <property type="evidence" value="ECO:0007669"/>
    <property type="project" value="UniProtKB-UniRule"/>
</dbReference>
<dbReference type="GO" id="GO:0006508">
    <property type="term" value="P:proteolysis"/>
    <property type="evidence" value="ECO:0007669"/>
    <property type="project" value="UniProtKB-KW"/>
</dbReference>
<dbReference type="Gene3D" id="3.40.710.10">
    <property type="entry name" value="DD-peptidase/beta-lactamase superfamily"/>
    <property type="match status" value="1"/>
</dbReference>
<dbReference type="HAMAP" id="MF_01034">
    <property type="entry name" value="S12_YfeW"/>
    <property type="match status" value="1"/>
</dbReference>
<dbReference type="InterPro" id="IPR001466">
    <property type="entry name" value="Beta-lactam-related"/>
</dbReference>
<dbReference type="InterPro" id="IPR012338">
    <property type="entry name" value="Beta-lactam/transpept-like"/>
</dbReference>
<dbReference type="InterPro" id="IPR050789">
    <property type="entry name" value="Diverse_Enzym_Activities"/>
</dbReference>
<dbReference type="InterPro" id="IPR022849">
    <property type="entry name" value="Pept_S12_YfeW/YbbE-like"/>
</dbReference>
<dbReference type="NCBIfam" id="NF002968">
    <property type="entry name" value="PRK03642.1"/>
    <property type="match status" value="1"/>
</dbReference>
<dbReference type="PANTHER" id="PTHR43283">
    <property type="entry name" value="BETA-LACTAMASE-RELATED"/>
    <property type="match status" value="1"/>
</dbReference>
<dbReference type="PANTHER" id="PTHR43283:SF11">
    <property type="entry name" value="BETA-LACTAMASE-RELATED DOMAIN-CONTAINING PROTEIN"/>
    <property type="match status" value="1"/>
</dbReference>
<dbReference type="Pfam" id="PF00144">
    <property type="entry name" value="Beta-lactamase"/>
    <property type="match status" value="1"/>
</dbReference>
<dbReference type="SUPFAM" id="SSF56601">
    <property type="entry name" value="beta-lactamase/transpeptidase-like"/>
    <property type="match status" value="1"/>
</dbReference>
<proteinExistence type="inferred from homology"/>
<keyword id="KW-0121">Carboxypeptidase</keyword>
<keyword id="KW-0997">Cell inner membrane</keyword>
<keyword id="KW-1003">Cell membrane</keyword>
<keyword id="KW-0378">Hydrolase</keyword>
<keyword id="KW-0472">Membrane</keyword>
<keyword id="KW-0645">Protease</keyword>
<keyword id="KW-0812">Transmembrane</keyword>
<keyword id="KW-1133">Transmembrane helix</keyword>
<feature type="chain" id="PRO_1000149441" description="Putative D-alanyl-D-alanine carboxypeptidase">
    <location>
        <begin position="1"/>
        <end position="432"/>
    </location>
</feature>
<feature type="transmembrane region" description="Helical; Signal-anchor" evidence="1">
    <location>
        <begin position="7"/>
        <end position="25"/>
    </location>
</feature>
<name>YFEW_SALCH</name>
<reference key="1">
    <citation type="journal article" date="2005" name="Nucleic Acids Res.">
        <title>The genome sequence of Salmonella enterica serovar Choleraesuis, a highly invasive and resistant zoonotic pathogen.</title>
        <authorList>
            <person name="Chiu C.-H."/>
            <person name="Tang P."/>
            <person name="Chu C."/>
            <person name="Hu S."/>
            <person name="Bao Q."/>
            <person name="Yu J."/>
            <person name="Chou Y.-Y."/>
            <person name="Wang H.-S."/>
            <person name="Lee Y.-S."/>
        </authorList>
    </citation>
    <scope>NUCLEOTIDE SEQUENCE [LARGE SCALE GENOMIC DNA]</scope>
    <source>
        <strain>SC-B67</strain>
    </source>
</reference>